<name>DPS_SALTY</name>
<feature type="initiator methionine" description="Removed" evidence="1">
    <location>
        <position position="1"/>
    </location>
</feature>
<feature type="chain" id="PRO_0000271592" description="DNA protection during starvation protein">
    <location>
        <begin position="2"/>
        <end position="167"/>
    </location>
</feature>
<feature type="binding site" evidence="2">
    <location>
        <position position="51"/>
    </location>
    <ligand>
        <name>Fe cation</name>
        <dbReference type="ChEBI" id="CHEBI:24875"/>
    </ligand>
</feature>
<feature type="binding site" evidence="2">
    <location>
        <position position="78"/>
    </location>
    <ligand>
        <name>Fe cation</name>
        <dbReference type="ChEBI" id="CHEBI:24875"/>
    </ligand>
</feature>
<feature type="binding site" evidence="2">
    <location>
        <position position="82"/>
    </location>
    <ligand>
        <name>Fe cation</name>
        <dbReference type="ChEBI" id="CHEBI:24875"/>
    </ligand>
</feature>
<proteinExistence type="inferred from homology"/>
<gene>
    <name evidence="2" type="primary">dps</name>
    <name type="ordered locus">STM0831</name>
</gene>
<organism>
    <name type="scientific">Salmonella typhimurium (strain LT2 / SGSC1412 / ATCC 700720)</name>
    <dbReference type="NCBI Taxonomy" id="99287"/>
    <lineage>
        <taxon>Bacteria</taxon>
        <taxon>Pseudomonadati</taxon>
        <taxon>Pseudomonadota</taxon>
        <taxon>Gammaproteobacteria</taxon>
        <taxon>Enterobacterales</taxon>
        <taxon>Enterobacteriaceae</taxon>
        <taxon>Salmonella</taxon>
    </lineage>
</organism>
<comment type="function">
    <text evidence="2">During stationary phase, binds the chromosome non-specifically, forming a highly ordered and stable dps-DNA co-crystal within which chromosomal DNA is condensed and protected from diverse damages. It protects DNA from oxidative damage by sequestering intracellular Fe(2+) ion and storing it in the form of Fe(3+) oxyhydroxide mineral, which can be released after reduction. One hydrogen peroxide oxidizes two Fe(2+) ions, which prevents hydroxyl radical production by the Fenton reaction.</text>
</comment>
<comment type="catalytic activity">
    <reaction evidence="2">
        <text>2 Fe(2+) + H2O2 + 2 H(+) = 2 Fe(3+) + 2 H2O</text>
        <dbReference type="Rhea" id="RHEA:48712"/>
        <dbReference type="ChEBI" id="CHEBI:15377"/>
        <dbReference type="ChEBI" id="CHEBI:15378"/>
        <dbReference type="ChEBI" id="CHEBI:16240"/>
        <dbReference type="ChEBI" id="CHEBI:29033"/>
        <dbReference type="ChEBI" id="CHEBI:29034"/>
    </reaction>
</comment>
<comment type="subunit">
    <text evidence="2">Homododecamer. The 12 subunits form a hollow sphere into which the mineral iron core of up to 500 Fe(3+) can be deposited.</text>
</comment>
<comment type="subcellular location">
    <subcellularLocation>
        <location evidence="2">Cytoplasm</location>
    </subcellularLocation>
</comment>
<comment type="similarity">
    <text evidence="2">Belongs to the Dps family.</text>
</comment>
<accession>Q7CQV9</accession>
<dbReference type="EC" id="1.16.-.-" evidence="2"/>
<dbReference type="EMBL" id="AE006468">
    <property type="protein sequence ID" value="AAL19767.1"/>
    <property type="molecule type" value="Genomic_DNA"/>
</dbReference>
<dbReference type="RefSeq" id="NP_459808.1">
    <property type="nucleotide sequence ID" value="NC_003197.2"/>
</dbReference>
<dbReference type="RefSeq" id="WP_000100805.1">
    <property type="nucleotide sequence ID" value="NC_003197.2"/>
</dbReference>
<dbReference type="SMR" id="Q7CQV9"/>
<dbReference type="STRING" id="99287.STM0831"/>
<dbReference type="PaxDb" id="99287-STM0831"/>
<dbReference type="GeneID" id="1252350"/>
<dbReference type="KEGG" id="stm:STM0831"/>
<dbReference type="PATRIC" id="fig|99287.12.peg.865"/>
<dbReference type="HOGENOM" id="CLU_098183_1_2_6"/>
<dbReference type="OMA" id="WDDYSIG"/>
<dbReference type="PhylomeDB" id="Q7CQV9"/>
<dbReference type="BioCyc" id="SENT99287:STM0831-MONOMER"/>
<dbReference type="Proteomes" id="UP000001014">
    <property type="component" value="Chromosome"/>
</dbReference>
<dbReference type="GO" id="GO:0005737">
    <property type="term" value="C:cytoplasm"/>
    <property type="evidence" value="ECO:0007669"/>
    <property type="project" value="UniProtKB-SubCell"/>
</dbReference>
<dbReference type="GO" id="GO:0003677">
    <property type="term" value="F:DNA binding"/>
    <property type="evidence" value="ECO:0007669"/>
    <property type="project" value="UniProtKB-UniRule"/>
</dbReference>
<dbReference type="GO" id="GO:0008199">
    <property type="term" value="F:ferric iron binding"/>
    <property type="evidence" value="ECO:0007669"/>
    <property type="project" value="UniProtKB-UniRule"/>
</dbReference>
<dbReference type="GO" id="GO:0016722">
    <property type="term" value="F:oxidoreductase activity, acting on metal ions"/>
    <property type="evidence" value="ECO:0007669"/>
    <property type="project" value="InterPro"/>
</dbReference>
<dbReference type="GO" id="GO:0030261">
    <property type="term" value="P:chromosome condensation"/>
    <property type="evidence" value="ECO:0007669"/>
    <property type="project" value="UniProtKB-KW"/>
</dbReference>
<dbReference type="GO" id="GO:0006879">
    <property type="term" value="P:intracellular iron ion homeostasis"/>
    <property type="evidence" value="ECO:0007669"/>
    <property type="project" value="UniProtKB-KW"/>
</dbReference>
<dbReference type="CDD" id="cd01043">
    <property type="entry name" value="DPS"/>
    <property type="match status" value="1"/>
</dbReference>
<dbReference type="FunFam" id="1.20.1260.10:FF:000003">
    <property type="entry name" value="DNA protection during starvation protein"/>
    <property type="match status" value="1"/>
</dbReference>
<dbReference type="Gene3D" id="1.20.1260.10">
    <property type="match status" value="1"/>
</dbReference>
<dbReference type="HAMAP" id="MF_01441">
    <property type="entry name" value="Dps"/>
    <property type="match status" value="1"/>
</dbReference>
<dbReference type="InterPro" id="IPR002177">
    <property type="entry name" value="DPS_DNA-bd"/>
</dbReference>
<dbReference type="InterPro" id="IPR023188">
    <property type="entry name" value="DPS_DNA-bd_CS"/>
</dbReference>
<dbReference type="InterPro" id="IPR023067">
    <property type="entry name" value="Dps_gammaproteobac"/>
</dbReference>
<dbReference type="InterPro" id="IPR012347">
    <property type="entry name" value="Ferritin-like"/>
</dbReference>
<dbReference type="InterPro" id="IPR009078">
    <property type="entry name" value="Ferritin-like_SF"/>
</dbReference>
<dbReference type="InterPro" id="IPR008331">
    <property type="entry name" value="Ferritin_DPS_dom"/>
</dbReference>
<dbReference type="NCBIfam" id="NF006975">
    <property type="entry name" value="PRK09448.1"/>
    <property type="match status" value="1"/>
</dbReference>
<dbReference type="PANTHER" id="PTHR42932:SF3">
    <property type="entry name" value="DNA PROTECTION DURING STARVATION PROTEIN"/>
    <property type="match status" value="1"/>
</dbReference>
<dbReference type="PANTHER" id="PTHR42932">
    <property type="entry name" value="GENERAL STRESS PROTEIN 20U"/>
    <property type="match status" value="1"/>
</dbReference>
<dbReference type="Pfam" id="PF00210">
    <property type="entry name" value="Ferritin"/>
    <property type="match status" value="1"/>
</dbReference>
<dbReference type="PIRSF" id="PIRSF005900">
    <property type="entry name" value="Dps"/>
    <property type="match status" value="1"/>
</dbReference>
<dbReference type="PRINTS" id="PR01346">
    <property type="entry name" value="HELNAPAPROT"/>
</dbReference>
<dbReference type="SUPFAM" id="SSF47240">
    <property type="entry name" value="Ferritin-like"/>
    <property type="match status" value="1"/>
</dbReference>
<dbReference type="PROSITE" id="PS00818">
    <property type="entry name" value="DPS_1"/>
    <property type="match status" value="1"/>
</dbReference>
<dbReference type="PROSITE" id="PS00819">
    <property type="entry name" value="DPS_2"/>
    <property type="match status" value="1"/>
</dbReference>
<keyword id="KW-0963">Cytoplasm</keyword>
<keyword id="KW-0226">DNA condensation</keyword>
<keyword id="KW-0238">DNA-binding</keyword>
<keyword id="KW-0408">Iron</keyword>
<keyword id="KW-0409">Iron storage</keyword>
<keyword id="KW-0479">Metal-binding</keyword>
<keyword id="KW-0560">Oxidoreductase</keyword>
<keyword id="KW-1185">Reference proteome</keyword>
<evidence type="ECO:0000250" key="1"/>
<evidence type="ECO:0000255" key="2">
    <source>
        <dbReference type="HAMAP-Rule" id="MF_01441"/>
    </source>
</evidence>
<protein>
    <recommendedName>
        <fullName evidence="2">DNA protection during starvation protein</fullName>
        <ecNumber evidence="2">1.16.-.-</ecNumber>
    </recommendedName>
</protein>
<sequence>MSTAKLVKTKASNLLYTRNDVSESDKKATVELLNRQVIQFIDLSLITKQAHWNMRGANFIAVHEMLDGFRTALTDHLDTMAERAVQLGGVALGTTQVINSKTPLKSYPLDIHNVQDHLKELADRYAVVANDVRKAIGEAKDEDTADIFTAASRDLDKFLWFIESNIE</sequence>
<reference key="1">
    <citation type="journal article" date="2001" name="Nature">
        <title>Complete genome sequence of Salmonella enterica serovar Typhimurium LT2.</title>
        <authorList>
            <person name="McClelland M."/>
            <person name="Sanderson K.E."/>
            <person name="Spieth J."/>
            <person name="Clifton S.W."/>
            <person name="Latreille P."/>
            <person name="Courtney L."/>
            <person name="Porwollik S."/>
            <person name="Ali J."/>
            <person name="Dante M."/>
            <person name="Du F."/>
            <person name="Hou S."/>
            <person name="Layman D."/>
            <person name="Leonard S."/>
            <person name="Nguyen C."/>
            <person name="Scott K."/>
            <person name="Holmes A."/>
            <person name="Grewal N."/>
            <person name="Mulvaney E."/>
            <person name="Ryan E."/>
            <person name="Sun H."/>
            <person name="Florea L."/>
            <person name="Miller W."/>
            <person name="Stoneking T."/>
            <person name="Nhan M."/>
            <person name="Waterston R."/>
            <person name="Wilson R.K."/>
        </authorList>
    </citation>
    <scope>NUCLEOTIDE SEQUENCE [LARGE SCALE GENOMIC DNA]</scope>
    <source>
        <strain>LT2 / SGSC1412 / ATCC 700720</strain>
    </source>
</reference>